<proteinExistence type="evidence at protein level"/>
<keyword id="KW-0002">3D-structure</keyword>
<keyword id="KW-1004">Congenital myasthenic syndrome</keyword>
<keyword id="KW-0968">Cytoplasmic vesicle</keyword>
<keyword id="KW-0225">Disease variant</keyword>
<keyword id="KW-0325">Glycoprotein</keyword>
<keyword id="KW-0472">Membrane</keyword>
<keyword id="KW-0532">Neurotransmitter transport</keyword>
<keyword id="KW-1267">Proteomics identification</keyword>
<keyword id="KW-1185">Reference proteome</keyword>
<keyword id="KW-0770">Synapse</keyword>
<keyword id="KW-0812">Transmembrane</keyword>
<keyword id="KW-1133">Transmembrane helix</keyword>
<keyword id="KW-0813">Transport</keyword>
<feature type="chain" id="PRO_0000127517" description="Vesicular acetylcholine transporter">
    <location>
        <begin position="1"/>
        <end position="532"/>
    </location>
</feature>
<feature type="topological domain" description="Cytoplasmic" evidence="3">
    <location>
        <begin position="1"/>
        <end position="33"/>
    </location>
</feature>
<feature type="transmembrane region" description="Helical" evidence="3">
    <location>
        <begin position="34"/>
        <end position="54"/>
    </location>
</feature>
<feature type="topological domain" description="Lumenal, vesicle" evidence="3">
    <location>
        <begin position="55"/>
        <end position="125"/>
    </location>
</feature>
<feature type="transmembrane region" description="Helical" evidence="3">
    <location>
        <begin position="126"/>
        <end position="146"/>
    </location>
</feature>
<feature type="topological domain" description="Cytoplasmic" evidence="3">
    <location>
        <begin position="147"/>
        <end position="152"/>
    </location>
</feature>
<feature type="transmembrane region" description="Helical" evidence="3">
    <location>
        <begin position="153"/>
        <end position="173"/>
    </location>
</feature>
<feature type="topological domain" description="Lumenal, vesicle" evidence="3">
    <location>
        <begin position="174"/>
        <end position="182"/>
    </location>
</feature>
<feature type="transmembrane region" description="Helical" evidence="3">
    <location>
        <begin position="183"/>
        <end position="203"/>
    </location>
</feature>
<feature type="topological domain" description="Cytoplasmic" evidence="3">
    <location>
        <begin position="204"/>
        <end position="213"/>
    </location>
</feature>
<feature type="transmembrane region" description="Helical" evidence="3">
    <location>
        <begin position="214"/>
        <end position="234"/>
    </location>
</feature>
<feature type="topological domain" description="Lumenal, vesicle" evidence="3">
    <location>
        <begin position="235"/>
        <end position="242"/>
    </location>
</feature>
<feature type="transmembrane region" description="Helical" evidence="3">
    <location>
        <begin position="243"/>
        <end position="263"/>
    </location>
</feature>
<feature type="topological domain" description="Cytoplasmic" evidence="3">
    <location>
        <begin position="264"/>
        <end position="289"/>
    </location>
</feature>
<feature type="transmembrane region" description="Helical" evidence="3">
    <location>
        <begin position="290"/>
        <end position="310"/>
    </location>
</feature>
<feature type="topological domain" description="Lumenal, vesicle" evidence="3">
    <location>
        <begin position="311"/>
        <end position="325"/>
    </location>
</feature>
<feature type="transmembrane region" description="Helical" evidence="3">
    <location>
        <begin position="326"/>
        <end position="346"/>
    </location>
</feature>
<feature type="topological domain" description="Cytoplasmic" evidence="3">
    <location>
        <begin position="347"/>
        <end position="356"/>
    </location>
</feature>
<feature type="transmembrane region" description="Helical" evidence="3">
    <location>
        <begin position="357"/>
        <end position="377"/>
    </location>
</feature>
<feature type="topological domain" description="Lumenal, vesicle" evidence="3">
    <location>
        <begin position="378"/>
        <end position="388"/>
    </location>
</feature>
<feature type="transmembrane region" description="Helical" evidence="3">
    <location>
        <begin position="389"/>
        <end position="409"/>
    </location>
</feature>
<feature type="topological domain" description="Cytoplasmic" evidence="3">
    <location>
        <begin position="410"/>
        <end position="422"/>
    </location>
</feature>
<feature type="transmembrane region" description="Helical" evidence="3">
    <location>
        <begin position="423"/>
        <end position="443"/>
    </location>
</feature>
<feature type="topological domain" description="Lumenal, vesicle" evidence="3">
    <location>
        <begin position="444"/>
        <end position="447"/>
    </location>
</feature>
<feature type="transmembrane region" description="Helical" evidence="3">
    <location>
        <begin position="448"/>
        <end position="468"/>
    </location>
</feature>
<feature type="topological domain" description="Cytoplasmic" evidence="3">
    <location>
        <begin position="469"/>
        <end position="532"/>
    </location>
</feature>
<feature type="region of interest" description="Mediates interaction with SEC14L1" evidence="1">
    <location>
        <begin position="471"/>
        <end position="532"/>
    </location>
</feature>
<feature type="region of interest" description="Disordered" evidence="4">
    <location>
        <begin position="502"/>
        <end position="523"/>
    </location>
</feature>
<feature type="site" description="Important for transporter activity" evidence="2">
    <location>
        <position position="193"/>
    </location>
</feature>
<feature type="site" description="Important for transporter activity" evidence="8">
    <location>
        <position position="398"/>
    </location>
</feature>
<feature type="glycosylation site" description="N-linked (GlcNAc...) asparagine" evidence="3">
    <location>
        <position position="89"/>
    </location>
</feature>
<feature type="glycosylation site" description="N-linked (GlcNAc...) asparagine" evidence="3">
    <location>
        <position position="96"/>
    </location>
</feature>
<feature type="sequence variant" id="VAR_029152" description="In dbSNP:rs8187732.">
    <original>R</original>
    <variation>Q</variation>
    <location>
        <position position="11"/>
    </location>
</feature>
<feature type="sequence variant" id="VAR_020034" description="In dbSNP:rs8187733.">
    <original>A</original>
    <variation>P</variation>
    <location>
        <position position="13"/>
    </location>
</feature>
<feature type="sequence variant" id="VAR_020035" description="In dbSNP:rs8187734.">
    <original>R</original>
    <variation>W</variation>
    <location>
        <position position="29"/>
    </location>
</feature>
<feature type="sequence variant" id="VAR_078030" description="In CMS21; dbSNP:rs1057517665." evidence="10">
    <original>G</original>
    <variation>A</variation>
    <location>
        <position position="186"/>
    </location>
</feature>
<feature type="sequence variant" id="VAR_078031" description="In CMS21; dbSNP:rs1057517666." evidence="10">
    <original>D</original>
    <variation>H</variation>
    <location>
        <position position="398"/>
    </location>
</feature>
<feature type="sequence variant" id="VAR_024638" description="In dbSNP:rs8187730." evidence="5 6 11 13">
    <original>A</original>
    <variation>E</variation>
    <location>
        <position position="520"/>
    </location>
</feature>
<feature type="mutagenesis site" description="Loss of activity." evidence="8">
    <original>E</original>
    <variation>A</variation>
    <variation>K</variation>
    <location>
        <position position="309"/>
    </location>
</feature>
<feature type="mutagenesis site" description="Has normal transporter activity. Retains the transporter activity; when associated with E-398." evidence="8">
    <original>E</original>
    <variation>D</variation>
    <location>
        <position position="309"/>
    </location>
</feature>
<feature type="mutagenesis site" description="Has normal transporter activity. Loss of activity; when associated with N-398." evidence="8">
    <original>E</original>
    <variation>Q</variation>
    <location>
        <position position="309"/>
    </location>
</feature>
<feature type="mutagenesis site" description="Loss of activity." evidence="8">
    <original>D</original>
    <variation>N</variation>
    <location>
        <position position="398"/>
    </location>
</feature>
<protein>
    <recommendedName>
        <fullName>Vesicular acetylcholine transporter</fullName>
        <shortName>VAChT</shortName>
    </recommendedName>
    <alternativeName>
        <fullName>Solute carrier family 18 member 3</fullName>
    </alternativeName>
</protein>
<organism>
    <name type="scientific">Homo sapiens</name>
    <name type="common">Human</name>
    <dbReference type="NCBI Taxonomy" id="9606"/>
    <lineage>
        <taxon>Eukaryota</taxon>
        <taxon>Metazoa</taxon>
        <taxon>Chordata</taxon>
        <taxon>Craniata</taxon>
        <taxon>Vertebrata</taxon>
        <taxon>Euteleostomi</taxon>
        <taxon>Mammalia</taxon>
        <taxon>Eutheria</taxon>
        <taxon>Euarchontoglires</taxon>
        <taxon>Primates</taxon>
        <taxon>Haplorrhini</taxon>
        <taxon>Catarrhini</taxon>
        <taxon>Hominidae</taxon>
        <taxon>Homo</taxon>
    </lineage>
</organism>
<dbReference type="EMBL" id="U10554">
    <property type="protein sequence ID" value="AAB92675.1"/>
    <property type="molecule type" value="Genomic_DNA"/>
</dbReference>
<dbReference type="EMBL" id="U09210">
    <property type="protein sequence ID" value="AAA20497.1"/>
    <property type="molecule type" value="mRNA"/>
</dbReference>
<dbReference type="EMBL" id="AK313094">
    <property type="protein sequence ID" value="BAG35918.1"/>
    <property type="molecule type" value="mRNA"/>
</dbReference>
<dbReference type="EMBL" id="AC073366">
    <property type="status" value="NOT_ANNOTATED_CDS"/>
    <property type="molecule type" value="Genomic_DNA"/>
</dbReference>
<dbReference type="EMBL" id="CH471187">
    <property type="protein sequence ID" value="EAW93093.1"/>
    <property type="molecule type" value="Genomic_DNA"/>
</dbReference>
<dbReference type="EMBL" id="BC007765">
    <property type="protein sequence ID" value="AAH07765.1"/>
    <property type="molecule type" value="mRNA"/>
</dbReference>
<dbReference type="CCDS" id="CCDS7231.1"/>
<dbReference type="PIR" id="I38658">
    <property type="entry name" value="I38658"/>
</dbReference>
<dbReference type="RefSeq" id="NP_003046.2">
    <property type="nucleotide sequence ID" value="NM_003055.3"/>
</dbReference>
<dbReference type="PDB" id="8XTW">
    <property type="method" value="EM"/>
    <property type="resolution" value="3.30 A"/>
    <property type="chains" value="A=27-478"/>
</dbReference>
<dbReference type="PDB" id="8XTX">
    <property type="method" value="EM"/>
    <property type="resolution" value="3.40 A"/>
    <property type="chains" value="A=27-478"/>
</dbReference>
<dbReference type="PDB" id="8XTY">
    <property type="method" value="EM"/>
    <property type="resolution" value="2.70 A"/>
    <property type="chains" value="A=27-478"/>
</dbReference>
<dbReference type="PDB" id="8ZMR">
    <property type="method" value="EM"/>
    <property type="resolution" value="3.50 A"/>
    <property type="chains" value="A=34-524"/>
</dbReference>
<dbReference type="PDB" id="8ZMS">
    <property type="method" value="EM"/>
    <property type="resolution" value="3.70 A"/>
    <property type="chains" value="A=34-524"/>
</dbReference>
<dbReference type="PDBsum" id="8XTW"/>
<dbReference type="PDBsum" id="8XTX"/>
<dbReference type="PDBsum" id="8XTY"/>
<dbReference type="PDBsum" id="8ZMR"/>
<dbReference type="PDBsum" id="8ZMS"/>
<dbReference type="EMDB" id="EMD-38651"/>
<dbReference type="EMDB" id="EMD-38652"/>
<dbReference type="EMDB" id="EMD-38653"/>
<dbReference type="EMDB" id="EMD-60254"/>
<dbReference type="EMDB" id="EMD-60255"/>
<dbReference type="SMR" id="Q16572"/>
<dbReference type="BioGRID" id="112460">
    <property type="interactions" value="7"/>
</dbReference>
<dbReference type="FunCoup" id="Q16572">
    <property type="interactions" value="235"/>
</dbReference>
<dbReference type="IntAct" id="Q16572">
    <property type="interactions" value="4"/>
</dbReference>
<dbReference type="STRING" id="9606.ENSP00000363229"/>
<dbReference type="BindingDB" id="Q16572"/>
<dbReference type="ChEMBL" id="CHEMBL4767"/>
<dbReference type="GuidetoPHARMACOLOGY" id="1013"/>
<dbReference type="TCDB" id="2.A.1.2.28">
    <property type="family name" value="the major facilitator superfamily (mfs)"/>
</dbReference>
<dbReference type="GlyCosmos" id="Q16572">
    <property type="glycosylation" value="2 sites, No reported glycans"/>
</dbReference>
<dbReference type="GlyGen" id="Q16572">
    <property type="glycosylation" value="4 sites"/>
</dbReference>
<dbReference type="iPTMnet" id="Q16572"/>
<dbReference type="PhosphoSitePlus" id="Q16572"/>
<dbReference type="BioMuta" id="SLC18A3"/>
<dbReference type="DMDM" id="313104043"/>
<dbReference type="MassIVE" id="Q16572"/>
<dbReference type="PaxDb" id="9606-ENSP00000363229"/>
<dbReference type="PeptideAtlas" id="Q16572"/>
<dbReference type="ProteomicsDB" id="60925"/>
<dbReference type="ABCD" id="Q16572">
    <property type="antibodies" value="1 sequenced antibody"/>
</dbReference>
<dbReference type="Antibodypedia" id="27651">
    <property type="antibodies" value="268 antibodies from 23 providers"/>
</dbReference>
<dbReference type="DNASU" id="6572"/>
<dbReference type="Ensembl" id="ENST00000374115.5">
    <property type="protein sequence ID" value="ENSP00000363229.3"/>
    <property type="gene ID" value="ENSG00000187714.7"/>
</dbReference>
<dbReference type="GeneID" id="6572"/>
<dbReference type="KEGG" id="hsa:6572"/>
<dbReference type="MANE-Select" id="ENST00000374115.5">
    <property type="protein sequence ID" value="ENSP00000363229.3"/>
    <property type="RefSeq nucleotide sequence ID" value="NM_003055.3"/>
    <property type="RefSeq protein sequence ID" value="NP_003046.2"/>
</dbReference>
<dbReference type="UCSC" id="uc001jhw.3">
    <property type="organism name" value="human"/>
</dbReference>
<dbReference type="AGR" id="HGNC:10936"/>
<dbReference type="CTD" id="6572"/>
<dbReference type="DisGeNET" id="6572"/>
<dbReference type="GeneCards" id="SLC18A3"/>
<dbReference type="HGNC" id="HGNC:10936">
    <property type="gene designation" value="SLC18A3"/>
</dbReference>
<dbReference type="HPA" id="ENSG00000187714">
    <property type="expression patterns" value="Tissue enriched (brain)"/>
</dbReference>
<dbReference type="MalaCards" id="SLC18A3"/>
<dbReference type="MIM" id="600336">
    <property type="type" value="gene"/>
</dbReference>
<dbReference type="MIM" id="617239">
    <property type="type" value="phenotype"/>
</dbReference>
<dbReference type="neXtProt" id="NX_Q16572"/>
<dbReference type="OpenTargets" id="ENSG00000187714"/>
<dbReference type="Orphanet" id="994">
    <property type="disease" value="Fetal akinesia deformation sequence"/>
</dbReference>
<dbReference type="Orphanet" id="98914">
    <property type="disease" value="Presynaptic congenital myasthenic syndromes"/>
</dbReference>
<dbReference type="PharmGKB" id="PA326"/>
<dbReference type="VEuPathDB" id="HostDB:ENSG00000187714"/>
<dbReference type="eggNOG" id="KOG3764">
    <property type="taxonomic scope" value="Eukaryota"/>
</dbReference>
<dbReference type="GeneTree" id="ENSGT00940000159449"/>
<dbReference type="HOGENOM" id="CLU_001265_10_9_1"/>
<dbReference type="InParanoid" id="Q16572"/>
<dbReference type="OMA" id="TRTPEVW"/>
<dbReference type="OrthoDB" id="5086884at2759"/>
<dbReference type="PAN-GO" id="Q16572">
    <property type="GO annotations" value="5 GO annotations based on evolutionary models"/>
</dbReference>
<dbReference type="PhylomeDB" id="Q16572"/>
<dbReference type="TreeFam" id="TF313494"/>
<dbReference type="PathwayCommons" id="Q16572"/>
<dbReference type="Reactome" id="R-HSA-264642">
    <property type="pathway name" value="Acetylcholine Neurotransmitter Release Cycle"/>
</dbReference>
<dbReference type="Reactome" id="R-HSA-8856825">
    <property type="pathway name" value="Cargo recognition for clathrin-mediated endocytosis"/>
</dbReference>
<dbReference type="Reactome" id="R-HSA-8856828">
    <property type="pathway name" value="Clathrin-mediated endocytosis"/>
</dbReference>
<dbReference type="SignaLink" id="Q16572"/>
<dbReference type="BioGRID-ORCS" id="6572">
    <property type="hits" value="15 hits in 1138 CRISPR screens"/>
</dbReference>
<dbReference type="GenomeRNAi" id="6572"/>
<dbReference type="Pharos" id="Q16572">
    <property type="development level" value="Tchem"/>
</dbReference>
<dbReference type="PRO" id="PR:Q16572"/>
<dbReference type="Proteomes" id="UP000005640">
    <property type="component" value="Chromosome 10"/>
</dbReference>
<dbReference type="RNAct" id="Q16572">
    <property type="molecule type" value="protein"/>
</dbReference>
<dbReference type="Bgee" id="ENSG00000187714">
    <property type="expression patterns" value="Expressed in primordial germ cell in gonad and 39 other cell types or tissues"/>
</dbReference>
<dbReference type="GO" id="GO:0030121">
    <property type="term" value="C:AP-1 adaptor complex"/>
    <property type="evidence" value="ECO:0000318"/>
    <property type="project" value="GO_Central"/>
</dbReference>
<dbReference type="GO" id="GO:0030122">
    <property type="term" value="C:AP-2 adaptor complex"/>
    <property type="evidence" value="ECO:0000318"/>
    <property type="project" value="GO_Central"/>
</dbReference>
<dbReference type="GO" id="GO:0030669">
    <property type="term" value="C:clathrin-coated endocytic vesicle membrane"/>
    <property type="evidence" value="ECO:0000304"/>
    <property type="project" value="Reactome"/>
</dbReference>
<dbReference type="GO" id="GO:0060201">
    <property type="term" value="C:clathrin-sculpted acetylcholine transport vesicle membrane"/>
    <property type="evidence" value="ECO:0000304"/>
    <property type="project" value="Reactome"/>
</dbReference>
<dbReference type="GO" id="GO:0005886">
    <property type="term" value="C:plasma membrane"/>
    <property type="evidence" value="ECO:0000304"/>
    <property type="project" value="Reactome"/>
</dbReference>
<dbReference type="GO" id="GO:0030672">
    <property type="term" value="C:synaptic vesicle membrane"/>
    <property type="evidence" value="ECO:0007669"/>
    <property type="project" value="UniProtKB-SubCell"/>
</dbReference>
<dbReference type="GO" id="GO:0043195">
    <property type="term" value="C:terminal bouton"/>
    <property type="evidence" value="ECO:0000318"/>
    <property type="project" value="GO_Central"/>
</dbReference>
<dbReference type="GO" id="GO:0005277">
    <property type="term" value="F:acetylcholine transmembrane transporter activity"/>
    <property type="evidence" value="ECO:0000318"/>
    <property type="project" value="GO_Central"/>
</dbReference>
<dbReference type="GO" id="GO:0005278">
    <property type="term" value="F:acetylcholine:proton antiporter activity"/>
    <property type="evidence" value="ECO:0000314"/>
    <property type="project" value="UniProtKB"/>
</dbReference>
<dbReference type="GO" id="GO:0015311">
    <property type="term" value="F:monoamine:proton antiporter activity"/>
    <property type="evidence" value="ECO:0000314"/>
    <property type="project" value="UniProtKB"/>
</dbReference>
<dbReference type="GO" id="GO:0051630">
    <property type="term" value="P:acetylcholine uptake"/>
    <property type="evidence" value="ECO:0000314"/>
    <property type="project" value="UniProtKB"/>
</dbReference>
<dbReference type="GO" id="GO:0007268">
    <property type="term" value="P:chemical synaptic transmission"/>
    <property type="evidence" value="ECO:0000318"/>
    <property type="project" value="GO_Central"/>
</dbReference>
<dbReference type="GO" id="GO:0006836">
    <property type="term" value="P:neurotransmitter transport"/>
    <property type="evidence" value="ECO:0000304"/>
    <property type="project" value="Reactome"/>
</dbReference>
<dbReference type="GO" id="GO:0014057">
    <property type="term" value="P:positive regulation of acetylcholine secretion, neurotransmission"/>
    <property type="evidence" value="ECO:0000250"/>
    <property type="project" value="UniProtKB"/>
</dbReference>
<dbReference type="GO" id="GO:1900273">
    <property type="term" value="P:positive regulation of long-term synaptic potentiation"/>
    <property type="evidence" value="ECO:0000250"/>
    <property type="project" value="UniProtKB"/>
</dbReference>
<dbReference type="GO" id="GO:1904398">
    <property type="term" value="P:positive regulation of neuromuscular junction development"/>
    <property type="evidence" value="ECO:0000250"/>
    <property type="project" value="UniProtKB"/>
</dbReference>
<dbReference type="GO" id="GO:0051610">
    <property type="term" value="P:serotonin uptake"/>
    <property type="evidence" value="ECO:0000314"/>
    <property type="project" value="UniProtKB"/>
</dbReference>
<dbReference type="CDD" id="cd17383">
    <property type="entry name" value="MFS_SLC18A3_VAChT"/>
    <property type="match status" value="1"/>
</dbReference>
<dbReference type="FunFam" id="1.20.1250.20:FF:000109">
    <property type="entry name" value="Putative vesicular acetylcholine transporter"/>
    <property type="match status" value="1"/>
</dbReference>
<dbReference type="Gene3D" id="1.20.1250.20">
    <property type="entry name" value="MFS general substrate transporter like domains"/>
    <property type="match status" value="1"/>
</dbReference>
<dbReference type="InterPro" id="IPR011701">
    <property type="entry name" value="MFS"/>
</dbReference>
<dbReference type="InterPro" id="IPR020846">
    <property type="entry name" value="MFS_dom"/>
</dbReference>
<dbReference type="InterPro" id="IPR036259">
    <property type="entry name" value="MFS_trans_sf"/>
</dbReference>
<dbReference type="InterPro" id="IPR050930">
    <property type="entry name" value="MFS_Vesicular_Transporter"/>
</dbReference>
<dbReference type="PANTHER" id="PTHR23506">
    <property type="entry name" value="GH10249P"/>
    <property type="match status" value="1"/>
</dbReference>
<dbReference type="PANTHER" id="PTHR23506:SF13">
    <property type="entry name" value="VESICULAR ACETYLCHOLINE TRANSPORTER"/>
    <property type="match status" value="1"/>
</dbReference>
<dbReference type="Pfam" id="PF07690">
    <property type="entry name" value="MFS_1"/>
    <property type="match status" value="1"/>
</dbReference>
<dbReference type="SUPFAM" id="SSF103473">
    <property type="entry name" value="MFS general substrate transporter"/>
    <property type="match status" value="1"/>
</dbReference>
<dbReference type="PROSITE" id="PS50850">
    <property type="entry name" value="MFS"/>
    <property type="match status" value="1"/>
</dbReference>
<accession>Q16572</accession>
<accession>B2R7S1</accession>
<name>VACHT_HUMAN</name>
<comment type="function">
    <text evidence="1 2 8 9 12">Electrogenic antiporter that exchanges one cholinergic neurotransmitter, acetylcholine or choline, with two intravesicular protons across the membrane of synaptic vesicles. Uses the electrochemical proton gradient established by the V-type proton-pump ATPase to store neurotransmitters inside the vesicles prior to their release via exocytosis (By similarity) (PubMed:20225888, PubMed:8910293). Determines cholinergic vesicular quantal size at presynaptic nerve terminals in developing neuro-muscular junctions with an impact on motor neuron differentiation and innervation pattern (By similarity). Part of forebrain cholinergic system, regulates hippocampal synapse transmissions that underlie spatial memory formation (By similarity). Can transport serotonin.</text>
</comment>
<comment type="catalytic activity">
    <reaction evidence="8 9 12">
        <text>acetylcholine(out) + 2 H(+)(in) = acetylcholine(in) + 2 H(+)(out)</text>
        <dbReference type="Rhea" id="RHEA:72891"/>
        <dbReference type="ChEBI" id="CHEBI:15355"/>
        <dbReference type="ChEBI" id="CHEBI:15378"/>
    </reaction>
    <physiologicalReaction direction="left-to-right" evidence="15">
        <dbReference type="Rhea" id="RHEA:72892"/>
    </physiologicalReaction>
</comment>
<comment type="catalytic activity">
    <reaction evidence="2">
        <text>choline(in) + 2 H(+)(out) = choline(out) + 2 H(+)(in)</text>
        <dbReference type="Rhea" id="RHEA:73819"/>
        <dbReference type="ChEBI" id="CHEBI:15354"/>
        <dbReference type="ChEBI" id="CHEBI:15378"/>
    </reaction>
    <physiologicalReaction direction="left-to-right" evidence="2">
        <dbReference type="Rhea" id="RHEA:73820"/>
    </physiologicalReaction>
</comment>
<comment type="catalytic activity">
    <reaction evidence="9">
        <text>serotonin(in) + 2 H(+)(out) = serotonin(out) + 2 H(+)(in)</text>
        <dbReference type="Rhea" id="RHEA:73743"/>
        <dbReference type="ChEBI" id="CHEBI:15378"/>
        <dbReference type="ChEBI" id="CHEBI:350546"/>
    </reaction>
</comment>
<comment type="activity regulation">
    <text evidence="9 12">Potently inhibited by L-vesamicol, reserpine and tetrabenazine.</text>
</comment>
<comment type="biophysicochemical properties">
    <kinetics>
        <KM evidence="12">0.97 mM for acetylcholine</KM>
        <KM evidence="8">0.75 mM for acetylcholine</KM>
        <Vmax evidence="12">0.58 nmol/min/mg enzyme toward acetylcholine</Vmax>
    </kinetics>
    <phDependence>
        <text evidence="8">Optimum pH is 7.</text>
    </phDependence>
</comment>
<comment type="subunit">
    <text evidence="7">Interacts with SEC14L1.</text>
</comment>
<comment type="interaction">
    <interactant intactId="EBI-17598000">
        <id>Q16572</id>
    </interactant>
    <interactant intactId="EBI-9083477">
        <id>Q9P0B6</id>
        <label>CCDC167</label>
    </interactant>
    <organismsDiffer>false</organismsDiffer>
    <experiments>3</experiments>
</comment>
<comment type="interaction">
    <interactant intactId="EBI-17598000">
        <id>Q16572</id>
    </interactant>
    <interactant intactId="EBI-11956541">
        <id>Q9GZY8-5</id>
        <label>MFF</label>
    </interactant>
    <organismsDiffer>false</organismsDiffer>
    <experiments>3</experiments>
</comment>
<comment type="interaction">
    <interactant intactId="EBI-17598000">
        <id>Q16572</id>
    </interactant>
    <interactant intactId="EBI-12213001">
        <id>I3L0A0</id>
        <label>PEDS1-UBE2V1</label>
    </interactant>
    <organismsDiffer>false</organismsDiffer>
    <experiments>3</experiments>
</comment>
<comment type="subcellular location">
    <subcellularLocation>
        <location evidence="2">Cytoplasmic vesicle</location>
        <location evidence="2">Secretory vesicle</location>
        <location evidence="2">Synaptic vesicle membrane</location>
        <topology evidence="3">Multi-pass membrane protein</topology>
    </subcellularLocation>
</comment>
<comment type="tissue specificity">
    <text evidence="11">Peripheral and central cholinergic nervous systems.</text>
</comment>
<comment type="disease" evidence="10">
    <disease id="DI-04909">
        <name>Myasthenic syndrome, congenital, 21, presynaptic</name>
        <acronym>CMS21</acronym>
        <description>A form of congenital myasthenic syndrome, a group of disorders characterized by failure of neuromuscular transmission, including pre-synaptic, synaptic, and post-synaptic disorders that are not of autoimmune origin. Clinical features are easy fatigability and muscle weakness. CMS21 is an autosomal recessive, pre-synaptic form characterized by ptosis, ophthalmoplegia, fatigable weakness, apneic crises, and deterioration of symptoms in cold water. Learning difficulties and left ventricular dysfunction may be present in some patients.</description>
        <dbReference type="MIM" id="617239"/>
    </disease>
    <text>The disease is caused by variants affecting the gene represented in this entry.</text>
</comment>
<comment type="similarity">
    <text evidence="14">Belongs to the major facilitator superfamily. Vesicular transporter family.</text>
</comment>
<reference key="1">
    <citation type="journal article" date="1994" name="J. Biol. Chem.">
        <title>Functional identification of a vesicular acetylcholine transporter and its expression from a 'cholinergic' gene locus.</title>
        <authorList>
            <person name="Erickson J.D."/>
            <person name="Varoqui H."/>
            <person name="Schafer M.K.-H."/>
            <person name="Modi W."/>
            <person name="Diebler M.-F."/>
            <person name="Weihe E."/>
            <person name="Rand J.B."/>
            <person name="Eiden L.E."/>
            <person name="Bonner T.I."/>
            <person name="Usdin T.B."/>
        </authorList>
    </citation>
    <scope>NUCLEOTIDE SEQUENCE [GENOMIC DNA / MRNA]</scope>
    <scope>VARIANT GLU-520</scope>
    <source>
        <tissue>Brain</tissue>
    </source>
</reference>
<reference key="2">
    <citation type="journal article" date="2004" name="Nat. Genet.">
        <title>Complete sequencing and characterization of 21,243 full-length human cDNAs.</title>
        <authorList>
            <person name="Ota T."/>
            <person name="Suzuki Y."/>
            <person name="Nishikawa T."/>
            <person name="Otsuki T."/>
            <person name="Sugiyama T."/>
            <person name="Irie R."/>
            <person name="Wakamatsu A."/>
            <person name="Hayashi K."/>
            <person name="Sato H."/>
            <person name="Nagai K."/>
            <person name="Kimura K."/>
            <person name="Makita H."/>
            <person name="Sekine M."/>
            <person name="Obayashi M."/>
            <person name="Nishi T."/>
            <person name="Shibahara T."/>
            <person name="Tanaka T."/>
            <person name="Ishii S."/>
            <person name="Yamamoto J."/>
            <person name="Saito K."/>
            <person name="Kawai Y."/>
            <person name="Isono Y."/>
            <person name="Nakamura Y."/>
            <person name="Nagahari K."/>
            <person name="Murakami K."/>
            <person name="Yasuda T."/>
            <person name="Iwayanagi T."/>
            <person name="Wagatsuma M."/>
            <person name="Shiratori A."/>
            <person name="Sudo H."/>
            <person name="Hosoiri T."/>
            <person name="Kaku Y."/>
            <person name="Kodaira H."/>
            <person name="Kondo H."/>
            <person name="Sugawara M."/>
            <person name="Takahashi M."/>
            <person name="Kanda K."/>
            <person name="Yokoi T."/>
            <person name="Furuya T."/>
            <person name="Kikkawa E."/>
            <person name="Omura Y."/>
            <person name="Abe K."/>
            <person name="Kamihara K."/>
            <person name="Katsuta N."/>
            <person name="Sato K."/>
            <person name="Tanikawa M."/>
            <person name="Yamazaki M."/>
            <person name="Ninomiya K."/>
            <person name="Ishibashi T."/>
            <person name="Yamashita H."/>
            <person name="Murakawa K."/>
            <person name="Fujimori K."/>
            <person name="Tanai H."/>
            <person name="Kimata M."/>
            <person name="Watanabe M."/>
            <person name="Hiraoka S."/>
            <person name="Chiba Y."/>
            <person name="Ishida S."/>
            <person name="Ono Y."/>
            <person name="Takiguchi S."/>
            <person name="Watanabe S."/>
            <person name="Yosida M."/>
            <person name="Hotuta T."/>
            <person name="Kusano J."/>
            <person name="Kanehori K."/>
            <person name="Takahashi-Fujii A."/>
            <person name="Hara H."/>
            <person name="Tanase T.-O."/>
            <person name="Nomura Y."/>
            <person name="Togiya S."/>
            <person name="Komai F."/>
            <person name="Hara R."/>
            <person name="Takeuchi K."/>
            <person name="Arita M."/>
            <person name="Imose N."/>
            <person name="Musashino K."/>
            <person name="Yuuki H."/>
            <person name="Oshima A."/>
            <person name="Sasaki N."/>
            <person name="Aotsuka S."/>
            <person name="Yoshikawa Y."/>
            <person name="Matsunawa H."/>
            <person name="Ichihara T."/>
            <person name="Shiohata N."/>
            <person name="Sano S."/>
            <person name="Moriya S."/>
            <person name="Momiyama H."/>
            <person name="Satoh N."/>
            <person name="Takami S."/>
            <person name="Terashima Y."/>
            <person name="Suzuki O."/>
            <person name="Nakagawa S."/>
            <person name="Senoh A."/>
            <person name="Mizoguchi H."/>
            <person name="Goto Y."/>
            <person name="Shimizu F."/>
            <person name="Wakebe H."/>
            <person name="Hishigaki H."/>
            <person name="Watanabe T."/>
            <person name="Sugiyama A."/>
            <person name="Takemoto M."/>
            <person name="Kawakami B."/>
            <person name="Yamazaki M."/>
            <person name="Watanabe K."/>
            <person name="Kumagai A."/>
            <person name="Itakura S."/>
            <person name="Fukuzumi Y."/>
            <person name="Fujimori Y."/>
            <person name="Komiyama M."/>
            <person name="Tashiro H."/>
            <person name="Tanigami A."/>
            <person name="Fujiwara T."/>
            <person name="Ono T."/>
            <person name="Yamada K."/>
            <person name="Fujii Y."/>
            <person name="Ozaki K."/>
            <person name="Hirao M."/>
            <person name="Ohmori Y."/>
            <person name="Kawabata A."/>
            <person name="Hikiji T."/>
            <person name="Kobatake N."/>
            <person name="Inagaki H."/>
            <person name="Ikema Y."/>
            <person name="Okamoto S."/>
            <person name="Okitani R."/>
            <person name="Kawakami T."/>
            <person name="Noguchi S."/>
            <person name="Itoh T."/>
            <person name="Shigeta K."/>
            <person name="Senba T."/>
            <person name="Matsumura K."/>
            <person name="Nakajima Y."/>
            <person name="Mizuno T."/>
            <person name="Morinaga M."/>
            <person name="Sasaki M."/>
            <person name="Togashi T."/>
            <person name="Oyama M."/>
            <person name="Hata H."/>
            <person name="Watanabe M."/>
            <person name="Komatsu T."/>
            <person name="Mizushima-Sugano J."/>
            <person name="Satoh T."/>
            <person name="Shirai Y."/>
            <person name="Takahashi Y."/>
            <person name="Nakagawa K."/>
            <person name="Okumura K."/>
            <person name="Nagase T."/>
            <person name="Nomura N."/>
            <person name="Kikuchi H."/>
            <person name="Masuho Y."/>
            <person name="Yamashita R."/>
            <person name="Nakai K."/>
            <person name="Yada T."/>
            <person name="Nakamura Y."/>
            <person name="Ohara O."/>
            <person name="Isogai T."/>
            <person name="Sugano S."/>
        </authorList>
    </citation>
    <scope>NUCLEOTIDE SEQUENCE [LARGE SCALE MRNA]</scope>
    <scope>VARIANT GLU-520</scope>
    <source>
        <tissue>Thalamus</tissue>
    </source>
</reference>
<reference key="3">
    <citation type="journal article" date="2004" name="Nature">
        <title>The DNA sequence and comparative analysis of human chromosome 10.</title>
        <authorList>
            <person name="Deloukas P."/>
            <person name="Earthrowl M.E."/>
            <person name="Grafham D.V."/>
            <person name="Rubenfield M."/>
            <person name="French L."/>
            <person name="Steward C.A."/>
            <person name="Sims S.K."/>
            <person name="Jones M.C."/>
            <person name="Searle S."/>
            <person name="Scott C."/>
            <person name="Howe K."/>
            <person name="Hunt S.E."/>
            <person name="Andrews T.D."/>
            <person name="Gilbert J.G.R."/>
            <person name="Swarbreck D."/>
            <person name="Ashurst J.L."/>
            <person name="Taylor A."/>
            <person name="Battles J."/>
            <person name="Bird C.P."/>
            <person name="Ainscough R."/>
            <person name="Almeida J.P."/>
            <person name="Ashwell R.I.S."/>
            <person name="Ambrose K.D."/>
            <person name="Babbage A.K."/>
            <person name="Bagguley C.L."/>
            <person name="Bailey J."/>
            <person name="Banerjee R."/>
            <person name="Bates K."/>
            <person name="Beasley H."/>
            <person name="Bray-Allen S."/>
            <person name="Brown A.J."/>
            <person name="Brown J.Y."/>
            <person name="Burford D.C."/>
            <person name="Burrill W."/>
            <person name="Burton J."/>
            <person name="Cahill P."/>
            <person name="Camire D."/>
            <person name="Carter N.P."/>
            <person name="Chapman J.C."/>
            <person name="Clark S.Y."/>
            <person name="Clarke G."/>
            <person name="Clee C.M."/>
            <person name="Clegg S."/>
            <person name="Corby N."/>
            <person name="Coulson A."/>
            <person name="Dhami P."/>
            <person name="Dutta I."/>
            <person name="Dunn M."/>
            <person name="Faulkner L."/>
            <person name="Frankish A."/>
            <person name="Frankland J.A."/>
            <person name="Garner P."/>
            <person name="Garnett J."/>
            <person name="Gribble S."/>
            <person name="Griffiths C."/>
            <person name="Grocock R."/>
            <person name="Gustafson E."/>
            <person name="Hammond S."/>
            <person name="Harley J.L."/>
            <person name="Hart E."/>
            <person name="Heath P.D."/>
            <person name="Ho T.P."/>
            <person name="Hopkins B."/>
            <person name="Horne J."/>
            <person name="Howden P.J."/>
            <person name="Huckle E."/>
            <person name="Hynds C."/>
            <person name="Johnson C."/>
            <person name="Johnson D."/>
            <person name="Kana A."/>
            <person name="Kay M."/>
            <person name="Kimberley A.M."/>
            <person name="Kershaw J.K."/>
            <person name="Kokkinaki M."/>
            <person name="Laird G.K."/>
            <person name="Lawlor S."/>
            <person name="Lee H.M."/>
            <person name="Leongamornlert D.A."/>
            <person name="Laird G."/>
            <person name="Lloyd C."/>
            <person name="Lloyd D.M."/>
            <person name="Loveland J."/>
            <person name="Lovell J."/>
            <person name="McLaren S."/>
            <person name="McLay K.E."/>
            <person name="McMurray A."/>
            <person name="Mashreghi-Mohammadi M."/>
            <person name="Matthews L."/>
            <person name="Milne S."/>
            <person name="Nickerson T."/>
            <person name="Nguyen M."/>
            <person name="Overton-Larty E."/>
            <person name="Palmer S.A."/>
            <person name="Pearce A.V."/>
            <person name="Peck A.I."/>
            <person name="Pelan S."/>
            <person name="Phillimore B."/>
            <person name="Porter K."/>
            <person name="Rice C.M."/>
            <person name="Rogosin A."/>
            <person name="Ross M.T."/>
            <person name="Sarafidou T."/>
            <person name="Sehra H.K."/>
            <person name="Shownkeen R."/>
            <person name="Skuce C.D."/>
            <person name="Smith M."/>
            <person name="Standring L."/>
            <person name="Sycamore N."/>
            <person name="Tester J."/>
            <person name="Thorpe A."/>
            <person name="Torcasso W."/>
            <person name="Tracey A."/>
            <person name="Tromans A."/>
            <person name="Tsolas J."/>
            <person name="Wall M."/>
            <person name="Walsh J."/>
            <person name="Wang H."/>
            <person name="Weinstock K."/>
            <person name="West A.P."/>
            <person name="Willey D.L."/>
            <person name="Whitehead S.L."/>
            <person name="Wilming L."/>
            <person name="Wray P.W."/>
            <person name="Young L."/>
            <person name="Chen Y."/>
            <person name="Lovering R.C."/>
            <person name="Moschonas N.K."/>
            <person name="Siebert R."/>
            <person name="Fechtel K."/>
            <person name="Bentley D."/>
            <person name="Durbin R.M."/>
            <person name="Hubbard T."/>
            <person name="Doucette-Stamm L."/>
            <person name="Beck S."/>
            <person name="Smith D.R."/>
            <person name="Rogers J."/>
        </authorList>
    </citation>
    <scope>NUCLEOTIDE SEQUENCE [LARGE SCALE GENOMIC DNA]</scope>
</reference>
<reference key="4">
    <citation type="submission" date="2005-09" db="EMBL/GenBank/DDBJ databases">
        <authorList>
            <person name="Mural R.J."/>
            <person name="Istrail S."/>
            <person name="Sutton G.G."/>
            <person name="Florea L."/>
            <person name="Halpern A.L."/>
            <person name="Mobarry C.M."/>
            <person name="Lippert R."/>
            <person name="Walenz B."/>
            <person name="Shatkay H."/>
            <person name="Dew I."/>
            <person name="Miller J.R."/>
            <person name="Flanigan M.J."/>
            <person name="Edwards N.J."/>
            <person name="Bolanos R."/>
            <person name="Fasulo D."/>
            <person name="Halldorsson B.V."/>
            <person name="Hannenhalli S."/>
            <person name="Turner R."/>
            <person name="Yooseph S."/>
            <person name="Lu F."/>
            <person name="Nusskern D.R."/>
            <person name="Shue B.C."/>
            <person name="Zheng X.H."/>
            <person name="Zhong F."/>
            <person name="Delcher A.L."/>
            <person name="Huson D.H."/>
            <person name="Kravitz S.A."/>
            <person name="Mouchard L."/>
            <person name="Reinert K."/>
            <person name="Remington K.A."/>
            <person name="Clark A.G."/>
            <person name="Waterman M.S."/>
            <person name="Eichler E.E."/>
            <person name="Adams M.D."/>
            <person name="Hunkapiller M.W."/>
            <person name="Myers E.W."/>
            <person name="Venter J.C."/>
        </authorList>
    </citation>
    <scope>NUCLEOTIDE SEQUENCE [LARGE SCALE GENOMIC DNA]</scope>
    <scope>VARIANT GLU-520</scope>
</reference>
<reference key="5">
    <citation type="journal article" date="2004" name="Genome Res.">
        <title>The status, quality, and expansion of the NIH full-length cDNA project: the Mammalian Gene Collection (MGC).</title>
        <authorList>
            <consortium name="The MGC Project Team"/>
        </authorList>
    </citation>
    <scope>NUCLEOTIDE SEQUENCE [LARGE SCALE MRNA]</scope>
    <scope>VARIANT GLU-520</scope>
    <source>
        <tissue>Brain</tissue>
    </source>
</reference>
<reference key="6">
    <citation type="journal article" date="1996" name="J. Biol. Chem.">
        <title>Active transport of acetylcholine by the human vesicular acetylcholine transporter.</title>
        <authorList>
            <person name="Varoqui H."/>
            <person name="Erickson J.D."/>
        </authorList>
    </citation>
    <scope>FUNCTION</scope>
    <scope>TRANSPORT ACTIVITY</scope>
    <scope>ACTIVITY REGULATION</scope>
    <scope>BIOPHYSICOCHEMICAL PROPERTIES</scope>
</reference>
<reference key="7">
    <citation type="journal article" date="2007" name="Neurochem. Int.">
        <title>SEC14-like protein 1 interacts with cholinergic transporters.</title>
        <authorList>
            <person name="Ribeiro F.M."/>
            <person name="Ferreira L.T."/>
            <person name="Marion S."/>
            <person name="Fontes S."/>
            <person name="Gomez M."/>
            <person name="Ferguson S.S."/>
            <person name="Prado M.A."/>
            <person name="Prado V.F."/>
        </authorList>
    </citation>
    <scope>INTERACTION WITH SEC14L1</scope>
</reference>
<reference key="8">
    <citation type="journal article" date="2010" name="Biochemistry">
        <title>Possible important pair of acidic residues in vesicular acetylcholine transporter.</title>
        <authorList>
            <person name="Khare P."/>
            <person name="Ojeda A.M."/>
            <person name="Chandrasekaran A."/>
            <person name="Parsons S.M."/>
        </authorList>
    </citation>
    <scope>FUNCTION</scope>
    <scope>TRANSPORT ACTIVITY</scope>
    <scope>BIOPHYSICOCHEMICAL PROPERTIES</scope>
    <scope>MUTAGENESIS OF GLU-309 AND ASP-398</scope>
    <scope>SITE</scope>
</reference>
<reference key="9">
    <citation type="journal article" date="2014" name="Sci. Rep.">
        <title>Identification of a mammalian vesicular polyamine transporter.</title>
        <authorList>
            <person name="Hiasa M."/>
            <person name="Miyaji T."/>
            <person name="Haruna Y."/>
            <person name="Takeuchi T."/>
            <person name="Harada Y."/>
            <person name="Moriyama S."/>
            <person name="Yamamoto A."/>
            <person name="Omote H."/>
            <person name="Moriyama Y."/>
        </authorList>
    </citation>
    <scope>FUNCTION</scope>
    <scope>TRANSPORT ACTIVITY</scope>
    <scope>ACTIVITY REGULATION</scope>
</reference>
<reference key="10">
    <citation type="journal article" date="2016" name="Neurology">
        <title>Variants in SLC18A3, vesicular acetylcholine transporter, cause congenital myasthenic syndrome.</title>
        <authorList>
            <person name="O'Grady G.L."/>
            <person name="Verschuuren C."/>
            <person name="Yuen M."/>
            <person name="Webster R."/>
            <person name="Menezes M."/>
            <person name="Fock J.M."/>
            <person name="Pride N."/>
            <person name="Best H.A."/>
            <person name="Benavides Damm T."/>
            <person name="Turner C."/>
            <person name="Lek M."/>
            <person name="Engel A.G."/>
            <person name="North K.N."/>
            <person name="Clarke N.F."/>
            <person name="MacArthur D.G."/>
            <person name="Kamsteeg E.J."/>
            <person name="Cooper S.T."/>
        </authorList>
    </citation>
    <scope>VARIANTS CMS21 ALA-186 AND HIS-398</scope>
    <scope>INVOLVEMENT IN CMS21</scope>
</reference>
<evidence type="ECO:0000250" key="1">
    <source>
        <dbReference type="UniProtKB" id="O35304"/>
    </source>
</evidence>
<evidence type="ECO:0000250" key="2">
    <source>
        <dbReference type="UniProtKB" id="Q62666"/>
    </source>
</evidence>
<evidence type="ECO:0000255" key="3"/>
<evidence type="ECO:0000256" key="4">
    <source>
        <dbReference type="SAM" id="MobiDB-lite"/>
    </source>
</evidence>
<evidence type="ECO:0000269" key="5">
    <source>
    </source>
</evidence>
<evidence type="ECO:0000269" key="6">
    <source>
    </source>
</evidence>
<evidence type="ECO:0000269" key="7">
    <source>
    </source>
</evidence>
<evidence type="ECO:0000269" key="8">
    <source>
    </source>
</evidence>
<evidence type="ECO:0000269" key="9">
    <source>
    </source>
</evidence>
<evidence type="ECO:0000269" key="10">
    <source>
    </source>
</evidence>
<evidence type="ECO:0000269" key="11">
    <source>
    </source>
</evidence>
<evidence type="ECO:0000269" key="12">
    <source>
    </source>
</evidence>
<evidence type="ECO:0000269" key="13">
    <source ref="4"/>
</evidence>
<evidence type="ECO:0000305" key="14"/>
<evidence type="ECO:0000305" key="15">
    <source>
    </source>
</evidence>
<sequence length="532" mass="56903">MESAEPAGQARAAATKLSEAVGAALQEPRRQRRLVLVIVCVALLLDNMLYMVIVPIVPDYIAHMRGGGEGPTRTPEVWEPTLPLPTPANASAYTANTSASPTAAWPAGSALRPRYPTESEDVKIGVLFASKAILQLLVNPLSGPFIDRMSYDVPLLIGLGVMFASTVLFAFAEDYATLFAARSLQGLGSAFADTSGIAMIADKYPEEPERSRALGVALAFISFGSLVAPPFGGILYEFAGKRVPFLVLAAVSLFDALLLLAVAKPFSAAARARANLPVGTPIHRLMLDPYIAVVAGALTTCNIPLAFLEPTIATWMKHTMAASEWEMGMAWLPAFVPHVLGVYLTVRLAARYPHLQWLYGALGLAVIGASSCIVPACRSFAPLVVSLCGLCFGIALVDTALLPTLAFLVDVRHVSVYGSVYAIADISYSVAYALGPIVAGHIVHSLGFEQLSLGMGLANLLYAPVLLLLRNVGLLTRSRSERDVLLDEPPQGLYDAVRLRERPVSGQDGEPRSPPGPFDACEDDYNYYYTRS</sequence>
<gene>
    <name type="primary">SLC18A3</name>
    <name type="synonym">VACHT</name>
</gene>